<proteinExistence type="inferred from homology"/>
<feature type="chain" id="PRO_1000145849" description="Enterobactin exporter EntS">
    <location>
        <begin position="1"/>
        <end position="416"/>
    </location>
</feature>
<feature type="topological domain" description="Cytoplasmic" evidence="1">
    <location>
        <begin position="1"/>
        <end position="21"/>
    </location>
</feature>
<feature type="transmembrane region" description="Helical" evidence="1">
    <location>
        <begin position="22"/>
        <end position="42"/>
    </location>
</feature>
<feature type="topological domain" description="Periplasmic" evidence="1">
    <location>
        <begin position="43"/>
        <end position="55"/>
    </location>
</feature>
<feature type="transmembrane region" description="Helical" evidence="1">
    <location>
        <begin position="56"/>
        <end position="76"/>
    </location>
</feature>
<feature type="topological domain" description="Cytoplasmic" evidence="1">
    <location>
        <begin position="77"/>
        <end position="83"/>
    </location>
</feature>
<feature type="transmembrane region" description="Helical" evidence="1">
    <location>
        <begin position="84"/>
        <end position="104"/>
    </location>
</feature>
<feature type="topological domain" description="Periplasmic" evidence="1">
    <location>
        <begin position="105"/>
        <end position="109"/>
    </location>
</feature>
<feature type="transmembrane region" description="Helical" evidence="1">
    <location>
        <begin position="110"/>
        <end position="130"/>
    </location>
</feature>
<feature type="topological domain" description="Cytoplasmic" evidence="1">
    <location>
        <begin position="131"/>
        <end position="156"/>
    </location>
</feature>
<feature type="transmembrane region" description="Helical" evidence="1">
    <location>
        <begin position="157"/>
        <end position="177"/>
    </location>
</feature>
<feature type="topological domain" description="Periplasmic" evidence="1">
    <location>
        <position position="178"/>
    </location>
</feature>
<feature type="transmembrane region" description="Helical" evidence="1">
    <location>
        <begin position="179"/>
        <end position="199"/>
    </location>
</feature>
<feature type="topological domain" description="Cytoplasmic" evidence="1">
    <location>
        <begin position="200"/>
        <end position="218"/>
    </location>
</feature>
<feature type="transmembrane region" description="Helical" evidence="1">
    <location>
        <begin position="219"/>
        <end position="239"/>
    </location>
</feature>
<feature type="topological domain" description="Periplasmic" evidence="1">
    <location>
        <begin position="240"/>
        <end position="256"/>
    </location>
</feature>
<feature type="transmembrane region" description="Helical" evidence="1">
    <location>
        <begin position="257"/>
        <end position="277"/>
    </location>
</feature>
<feature type="topological domain" description="Cytoplasmic" evidence="1">
    <location>
        <begin position="278"/>
        <end position="287"/>
    </location>
</feature>
<feature type="transmembrane region" description="Helical" evidence="1">
    <location>
        <begin position="288"/>
        <end position="307"/>
    </location>
</feature>
<feature type="topological domain" description="Periplasmic" evidence="1">
    <location>
        <begin position="308"/>
        <end position="313"/>
    </location>
</feature>
<feature type="transmembrane region" description="Helical" evidence="1">
    <location>
        <begin position="314"/>
        <end position="336"/>
    </location>
</feature>
<feature type="topological domain" description="Cytoplasmic" evidence="1">
    <location>
        <begin position="337"/>
        <end position="356"/>
    </location>
</feature>
<feature type="transmembrane region" description="Helical" evidence="1">
    <location>
        <begin position="357"/>
        <end position="377"/>
    </location>
</feature>
<feature type="topological domain" description="Periplasmic" evidence="1">
    <location>
        <position position="378"/>
    </location>
</feature>
<feature type="transmembrane region" description="Helical" evidence="1">
    <location>
        <begin position="379"/>
        <end position="399"/>
    </location>
</feature>
<feature type="topological domain" description="Cytoplasmic" evidence="1">
    <location>
        <begin position="400"/>
        <end position="416"/>
    </location>
</feature>
<reference key="1">
    <citation type="journal article" date="2009" name="PLoS Genet.">
        <title>Organised genome dynamics in the Escherichia coli species results in highly diverse adaptive paths.</title>
        <authorList>
            <person name="Touchon M."/>
            <person name="Hoede C."/>
            <person name="Tenaillon O."/>
            <person name="Barbe V."/>
            <person name="Baeriswyl S."/>
            <person name="Bidet P."/>
            <person name="Bingen E."/>
            <person name="Bonacorsi S."/>
            <person name="Bouchier C."/>
            <person name="Bouvet O."/>
            <person name="Calteau A."/>
            <person name="Chiapello H."/>
            <person name="Clermont O."/>
            <person name="Cruveiller S."/>
            <person name="Danchin A."/>
            <person name="Diard M."/>
            <person name="Dossat C."/>
            <person name="Karoui M.E."/>
            <person name="Frapy E."/>
            <person name="Garry L."/>
            <person name="Ghigo J.M."/>
            <person name="Gilles A.M."/>
            <person name="Johnson J."/>
            <person name="Le Bouguenec C."/>
            <person name="Lescat M."/>
            <person name="Mangenot S."/>
            <person name="Martinez-Jehanne V."/>
            <person name="Matic I."/>
            <person name="Nassif X."/>
            <person name="Oztas S."/>
            <person name="Petit M.A."/>
            <person name="Pichon C."/>
            <person name="Rouy Z."/>
            <person name="Ruf C.S."/>
            <person name="Schneider D."/>
            <person name="Tourret J."/>
            <person name="Vacherie B."/>
            <person name="Vallenet D."/>
            <person name="Medigue C."/>
            <person name="Rocha E.P.C."/>
            <person name="Denamur E."/>
        </authorList>
    </citation>
    <scope>NUCLEOTIDE SEQUENCE [LARGE SCALE GENOMIC DNA]</scope>
    <source>
        <strain>ATCC 35469 / DSM 13698 / BCRC 15582 / CCUG 18766 / IAM 14443 / JCM 21226 / LMG 7866 / NBRC 102419 / NCTC 12128 / CDC 0568-73</strain>
    </source>
</reference>
<accession>B7LLK9</accession>
<protein>
    <recommendedName>
        <fullName evidence="1">Enterobactin exporter EntS</fullName>
    </recommendedName>
</protein>
<name>ENTS_ESCF3</name>
<comment type="function">
    <text evidence="1">Component of an export pathway for enterobactin.</text>
</comment>
<comment type="subcellular location">
    <subcellularLocation>
        <location evidence="1">Cell inner membrane</location>
        <topology evidence="1">Multi-pass membrane protein</topology>
    </subcellularLocation>
</comment>
<comment type="similarity">
    <text evidence="1">Belongs to the major facilitator superfamily. EntS (TC 2.A.1.38) family.</text>
</comment>
<evidence type="ECO:0000255" key="1">
    <source>
        <dbReference type="HAMAP-Rule" id="MF_01436"/>
    </source>
</evidence>
<dbReference type="EMBL" id="CU928158">
    <property type="protein sequence ID" value="CAQ89999.1"/>
    <property type="molecule type" value="Genomic_DNA"/>
</dbReference>
<dbReference type="RefSeq" id="WP_001041789.1">
    <property type="nucleotide sequence ID" value="NC_011740.1"/>
</dbReference>
<dbReference type="SMR" id="B7LLK9"/>
<dbReference type="GeneID" id="93776895"/>
<dbReference type="KEGG" id="efe:EFER_2503"/>
<dbReference type="HOGENOM" id="CLU_034180_11_0_6"/>
<dbReference type="OrthoDB" id="7283966at2"/>
<dbReference type="Proteomes" id="UP000000745">
    <property type="component" value="Chromosome"/>
</dbReference>
<dbReference type="GO" id="GO:0005886">
    <property type="term" value="C:plasma membrane"/>
    <property type="evidence" value="ECO:0007669"/>
    <property type="project" value="UniProtKB-SubCell"/>
</dbReference>
<dbReference type="GO" id="GO:0042931">
    <property type="term" value="F:enterobactin transmembrane transporter activity"/>
    <property type="evidence" value="ECO:0007669"/>
    <property type="project" value="InterPro"/>
</dbReference>
<dbReference type="CDD" id="cd06173">
    <property type="entry name" value="MFS_MefA_like"/>
    <property type="match status" value="1"/>
</dbReference>
<dbReference type="FunFam" id="1.20.1250.20:FF:000056">
    <property type="entry name" value="Enterobactin exporter EntS"/>
    <property type="match status" value="1"/>
</dbReference>
<dbReference type="Gene3D" id="1.20.1250.20">
    <property type="entry name" value="MFS general substrate transporter like domains"/>
    <property type="match status" value="1"/>
</dbReference>
<dbReference type="HAMAP" id="MF_01436">
    <property type="entry name" value="MFS_EntS"/>
    <property type="match status" value="1"/>
</dbReference>
<dbReference type="InterPro" id="IPR023722">
    <property type="entry name" value="Enterobactin_exp_EntS"/>
</dbReference>
<dbReference type="InterPro" id="IPR020846">
    <property type="entry name" value="MFS_dom"/>
</dbReference>
<dbReference type="InterPro" id="IPR036259">
    <property type="entry name" value="MFS_trans_sf"/>
</dbReference>
<dbReference type="InterPro" id="IPR010290">
    <property type="entry name" value="TM_effector"/>
</dbReference>
<dbReference type="NCBIfam" id="NF007792">
    <property type="entry name" value="PRK10489.1"/>
    <property type="match status" value="1"/>
</dbReference>
<dbReference type="PANTHER" id="PTHR23513:SF9">
    <property type="entry name" value="ENTEROBACTIN EXPORTER ENTS"/>
    <property type="match status" value="1"/>
</dbReference>
<dbReference type="PANTHER" id="PTHR23513">
    <property type="entry name" value="INTEGRAL MEMBRANE EFFLUX PROTEIN-RELATED"/>
    <property type="match status" value="1"/>
</dbReference>
<dbReference type="Pfam" id="PF05977">
    <property type="entry name" value="MFS_3"/>
    <property type="match status" value="1"/>
</dbReference>
<dbReference type="SUPFAM" id="SSF103473">
    <property type="entry name" value="MFS general substrate transporter"/>
    <property type="match status" value="1"/>
</dbReference>
<dbReference type="PROSITE" id="PS50850">
    <property type="entry name" value="MFS"/>
    <property type="match status" value="1"/>
</dbReference>
<keyword id="KW-0997">Cell inner membrane</keyword>
<keyword id="KW-1003">Cell membrane</keyword>
<keyword id="KW-0472">Membrane</keyword>
<keyword id="KW-0812">Transmembrane</keyword>
<keyword id="KW-1133">Transmembrane helix</keyword>
<keyword id="KW-0813">Transport</keyword>
<organism>
    <name type="scientific">Escherichia fergusonii (strain ATCC 35469 / DSM 13698 / CCUG 18766 / IAM 14443 / JCM 21226 / LMG 7866 / NBRC 102419 / NCTC 12128 / CDC 0568-73)</name>
    <dbReference type="NCBI Taxonomy" id="585054"/>
    <lineage>
        <taxon>Bacteria</taxon>
        <taxon>Pseudomonadati</taxon>
        <taxon>Pseudomonadota</taxon>
        <taxon>Gammaproteobacteria</taxon>
        <taxon>Enterobacterales</taxon>
        <taxon>Enterobacteriaceae</taxon>
        <taxon>Escherichia</taxon>
    </lineage>
</organism>
<gene>
    <name evidence="1" type="primary">entS</name>
    <name type="ordered locus">EFER_2503</name>
</gene>
<sequence>MNKQSWLLNLSLLKTHPAFRAVFLARFISIVSLGLLGVAVPVQIQMMTHSTWQVGLSVTLTGGAMFVGLMVGGVLADRYERKKVILLARGTCGIGFIGLCLNALLPEPSLLAIYLLGLWDGFFASLGVTALLAATPALVGRENLMQAGAITMLTVRLGSVISPMIGGLLLATGGVAWNYGLAAAGTFITLLPLLSLPALPPPPQPREHPLKSLLAGFRFLLASPLVGGIALLGGLLTMASAVRVLYPALADNWQMSAAQIGFLYAAIPLGAAIGALTSGKLAHSARPGLLMLLSTLGSFLAIGLFGLMPMWILGVVCLALFGWLSAVSSLLQYTMLQTQTPEAMLGRINGLWTAQNVTGDAIGAALLGGLGAMMTPVASASASGFGLLIIGVLLLLVLVELRRFRQTPPQVTASDS</sequence>